<dbReference type="EC" id="2.1.1.37"/>
<dbReference type="EMBL" id="AF019752">
    <property type="protein sequence ID" value="AAB70829.1"/>
    <property type="molecule type" value="Genomic_DNA"/>
</dbReference>
<dbReference type="SMR" id="O30868"/>
<dbReference type="REBASE" id="3409">
    <property type="entry name" value="M.HaeII"/>
</dbReference>
<dbReference type="PRO" id="PR:O30868"/>
<dbReference type="GO" id="GO:0003886">
    <property type="term" value="F:DNA (cytosine-5-)-methyltransferase activity"/>
    <property type="evidence" value="ECO:0007669"/>
    <property type="project" value="UniProtKB-EC"/>
</dbReference>
<dbReference type="GO" id="GO:0003677">
    <property type="term" value="F:DNA binding"/>
    <property type="evidence" value="ECO:0007669"/>
    <property type="project" value="UniProtKB-KW"/>
</dbReference>
<dbReference type="GO" id="GO:0009307">
    <property type="term" value="P:DNA restriction-modification system"/>
    <property type="evidence" value="ECO:0007669"/>
    <property type="project" value="UniProtKB-KW"/>
</dbReference>
<dbReference type="GO" id="GO:0032259">
    <property type="term" value="P:methylation"/>
    <property type="evidence" value="ECO:0007669"/>
    <property type="project" value="UniProtKB-KW"/>
</dbReference>
<dbReference type="CDD" id="cd00315">
    <property type="entry name" value="Cyt_C5_DNA_methylase"/>
    <property type="match status" value="1"/>
</dbReference>
<dbReference type="Gene3D" id="3.90.120.10">
    <property type="entry name" value="DNA Methylase, subunit A, domain 2"/>
    <property type="match status" value="1"/>
</dbReference>
<dbReference type="Gene3D" id="3.40.50.150">
    <property type="entry name" value="Vaccinia Virus protein VP39"/>
    <property type="match status" value="1"/>
</dbReference>
<dbReference type="InterPro" id="IPR050750">
    <property type="entry name" value="C5-MTase"/>
</dbReference>
<dbReference type="InterPro" id="IPR018117">
    <property type="entry name" value="C5_DNA_meth_AS"/>
</dbReference>
<dbReference type="InterPro" id="IPR001525">
    <property type="entry name" value="C5_MeTfrase"/>
</dbReference>
<dbReference type="InterPro" id="IPR031303">
    <property type="entry name" value="C5_meth_CS"/>
</dbReference>
<dbReference type="InterPro" id="IPR029063">
    <property type="entry name" value="SAM-dependent_MTases_sf"/>
</dbReference>
<dbReference type="NCBIfam" id="TIGR00675">
    <property type="entry name" value="dcm"/>
    <property type="match status" value="1"/>
</dbReference>
<dbReference type="PANTHER" id="PTHR46098">
    <property type="entry name" value="TRNA (CYTOSINE(38)-C(5))-METHYLTRANSFERASE"/>
    <property type="match status" value="1"/>
</dbReference>
<dbReference type="PANTHER" id="PTHR46098:SF1">
    <property type="entry name" value="TRNA (CYTOSINE(38)-C(5))-METHYLTRANSFERASE"/>
    <property type="match status" value="1"/>
</dbReference>
<dbReference type="Pfam" id="PF00145">
    <property type="entry name" value="DNA_methylase"/>
    <property type="match status" value="1"/>
</dbReference>
<dbReference type="PRINTS" id="PR00105">
    <property type="entry name" value="C5METTRFRASE"/>
</dbReference>
<dbReference type="SUPFAM" id="SSF53335">
    <property type="entry name" value="S-adenosyl-L-methionine-dependent methyltransferases"/>
    <property type="match status" value="1"/>
</dbReference>
<dbReference type="PROSITE" id="PS00094">
    <property type="entry name" value="C5_MTASE_1"/>
    <property type="match status" value="1"/>
</dbReference>
<dbReference type="PROSITE" id="PS00095">
    <property type="entry name" value="C5_MTASE_2"/>
    <property type="match status" value="1"/>
</dbReference>
<dbReference type="PROSITE" id="PS51679">
    <property type="entry name" value="SAM_MT_C5"/>
    <property type="match status" value="1"/>
</dbReference>
<feature type="chain" id="PRO_0000087877" description="Type II methyltransferase M.HaeII">
    <location>
        <begin position="1"/>
        <end position="318"/>
    </location>
</feature>
<feature type="domain" description="SAM-dependent MTase C5-type" evidence="1">
    <location>
        <begin position="4"/>
        <end position="304"/>
    </location>
</feature>
<feature type="active site" evidence="1 2">
    <location>
        <position position="73"/>
    </location>
</feature>
<keyword id="KW-0238">DNA-binding</keyword>
<keyword id="KW-0489">Methyltransferase</keyword>
<keyword id="KW-0680">Restriction system</keyword>
<keyword id="KW-0949">S-adenosyl-L-methionine</keyword>
<keyword id="KW-0808">Transferase</keyword>
<organism>
    <name type="scientific">Haemophilus aegyptius</name>
    <dbReference type="NCBI Taxonomy" id="197575"/>
    <lineage>
        <taxon>Bacteria</taxon>
        <taxon>Pseudomonadati</taxon>
        <taxon>Pseudomonadota</taxon>
        <taxon>Gammaproteobacteria</taxon>
        <taxon>Pasteurellales</taxon>
        <taxon>Pasteurellaceae</taxon>
        <taxon>Haemophilus</taxon>
    </lineage>
</organism>
<protein>
    <recommendedName>
        <fullName evidence="3">Type II methyltransferase M.HaeII</fullName>
        <shortName evidence="3">M.HaeII</shortName>
        <ecNumber>2.1.1.37</ecNumber>
    </recommendedName>
    <alternativeName>
        <fullName>Cytosine-specific methyltransferase HaeII</fullName>
    </alternativeName>
    <alternativeName>
        <fullName>Modification methylase HaeII</fullName>
    </alternativeName>
</protein>
<reference key="1">
    <citation type="journal article" date="1998" name="Biol. Chem.">
        <title>Sequence similarities between the genes encoding the S.NgoI and HaeII restriction/modification systems.</title>
        <authorList>
            <person name="Stein D.C."/>
            <person name="Gunn J.S."/>
            <person name="Piekarowicz A."/>
        </authorList>
    </citation>
    <scope>NUCLEOTIDE SEQUENCE [GENOMIC DNA]</scope>
    <source>
        <strain>ATCC 11116 / CCUG 25716 / NCTC 8502 / 180-a</strain>
    </source>
</reference>
<reference key="2">
    <citation type="journal article" date="2003" name="Nucleic Acids Res.">
        <title>A nomenclature for restriction enzymes, DNA methyltransferases, homing endonucleases and their genes.</title>
        <authorList>
            <person name="Roberts R.J."/>
            <person name="Belfort M."/>
            <person name="Bestor T."/>
            <person name="Bhagwat A.S."/>
            <person name="Bickle T.A."/>
            <person name="Bitinaite J."/>
            <person name="Blumenthal R.M."/>
            <person name="Degtyarev S.K."/>
            <person name="Dryden D.T."/>
            <person name="Dybvig K."/>
            <person name="Firman K."/>
            <person name="Gromova E.S."/>
            <person name="Gumport R.I."/>
            <person name="Halford S.E."/>
            <person name="Hattman S."/>
            <person name="Heitman J."/>
            <person name="Hornby D.P."/>
            <person name="Janulaitis A."/>
            <person name="Jeltsch A."/>
            <person name="Josephsen J."/>
            <person name="Kiss A."/>
            <person name="Klaenhammer T.R."/>
            <person name="Kobayashi I."/>
            <person name="Kong H."/>
            <person name="Krueger D.H."/>
            <person name="Lacks S."/>
            <person name="Marinus M.G."/>
            <person name="Miyahara M."/>
            <person name="Morgan R.D."/>
            <person name="Murray N.E."/>
            <person name="Nagaraja V."/>
            <person name="Piekarowicz A."/>
            <person name="Pingoud A."/>
            <person name="Raleigh E."/>
            <person name="Rao D.N."/>
            <person name="Reich N."/>
            <person name="Repin V.E."/>
            <person name="Selker E.U."/>
            <person name="Shaw P.C."/>
            <person name="Stein D.C."/>
            <person name="Stoddard B.L."/>
            <person name="Szybalski W."/>
            <person name="Trautner T.A."/>
            <person name="Van Etten J.L."/>
            <person name="Vitor J.M."/>
            <person name="Wilson G.G."/>
            <person name="Xu S.Y."/>
        </authorList>
    </citation>
    <scope>NOMENCLATURE</scope>
</reference>
<evidence type="ECO:0000255" key="1">
    <source>
        <dbReference type="PROSITE-ProRule" id="PRU01016"/>
    </source>
</evidence>
<evidence type="ECO:0000255" key="2">
    <source>
        <dbReference type="PROSITE-ProRule" id="PRU10018"/>
    </source>
</evidence>
<evidence type="ECO:0000303" key="3">
    <source>
    </source>
</evidence>
<evidence type="ECO:0000303" key="4">
    <source>
    </source>
</evidence>
<gene>
    <name type="primary">haeIIM</name>
    <name evidence="4" type="synonym">dcmA</name>
</gene>
<accession>O30868</accession>
<proteinExistence type="inferred from homology"/>
<name>MTH2_HAEAE</name>
<sequence length="318" mass="35670">MKEYKTIDLFAGIGGIRLGFEAFGCKNVFSSEWDKYAQSMYEVNFGEKPFGDINDISPSDIPDHDILLAGFPCQPFSIAGKGLGFADTRGTLFFNIEAILKAKKPKAFLLENVKRLTTHDNGNTFKVINDKLNKLGYTVYHKVLNTLDFGLPQKRERIYIVGFLDKLHFEFPKPIGKYEELSNILESDDVVPNNYFLSDELKRKRLSSITKDVPYPSIWHENISGNVSALPYSCALSVGGSYNYLVVNGVRRLTGPEMLRLQGFPDTFEINIPYSQVRKVAGNSVSVPVIRAIAGSMINSLNMATRKIYQAIQLSLLD</sequence>
<comment type="function">
    <text evidence="3">A methylase, recognizes the double-stranded sequence 5'-RGCGCY-3', methylates C-? on both strands, and protects the DNA from cleavage by the HaeII endonuclease.</text>
</comment>
<comment type="catalytic activity">
    <reaction evidence="2">
        <text>a 2'-deoxycytidine in DNA + S-adenosyl-L-methionine = a 5-methyl-2'-deoxycytidine in DNA + S-adenosyl-L-homocysteine + H(+)</text>
        <dbReference type="Rhea" id="RHEA:13681"/>
        <dbReference type="Rhea" id="RHEA-COMP:11369"/>
        <dbReference type="Rhea" id="RHEA-COMP:11370"/>
        <dbReference type="ChEBI" id="CHEBI:15378"/>
        <dbReference type="ChEBI" id="CHEBI:57856"/>
        <dbReference type="ChEBI" id="CHEBI:59789"/>
        <dbReference type="ChEBI" id="CHEBI:85452"/>
        <dbReference type="ChEBI" id="CHEBI:85454"/>
        <dbReference type="EC" id="2.1.1.37"/>
    </reaction>
</comment>
<comment type="similarity">
    <text evidence="1">Belongs to the class I-like SAM-binding methyltransferase superfamily. C5-methyltransferase family.</text>
</comment>